<reference key="1">
    <citation type="submission" date="2006-10" db="EMBL/GenBank/DDBJ databases">
        <authorList>
            <consortium name="NIH - Mammalian Gene Collection (MGC) project"/>
        </authorList>
    </citation>
    <scope>NUCLEOTIDE SEQUENCE [LARGE SCALE MRNA]</scope>
    <source>
        <strain>Hereford</strain>
        <tissue>Hippocampus</tissue>
    </source>
</reference>
<feature type="chain" id="PRO_0000282313" description="Tropomodulin-1">
    <location>
        <begin position="1"/>
        <end position="359"/>
    </location>
</feature>
<feature type="region of interest" description="Tropomyosin-binding" evidence="4">
    <location>
        <begin position="39"/>
        <end position="138"/>
    </location>
</feature>
<feature type="region of interest" description="Disordered" evidence="5">
    <location>
        <begin position="39"/>
        <end position="61"/>
    </location>
</feature>
<gene>
    <name type="primary">TMOD1</name>
</gene>
<evidence type="ECO:0000250" key="1"/>
<evidence type="ECO:0000250" key="2">
    <source>
        <dbReference type="UniProtKB" id="P28289"/>
    </source>
</evidence>
<evidence type="ECO:0000250" key="3">
    <source>
        <dbReference type="UniProtKB" id="P70567"/>
    </source>
</evidence>
<evidence type="ECO:0000255" key="4"/>
<evidence type="ECO:0000256" key="5">
    <source>
        <dbReference type="SAM" id="MobiDB-lite"/>
    </source>
</evidence>
<evidence type="ECO:0000305" key="6"/>
<keyword id="KW-0009">Actin-binding</keyword>
<keyword id="KW-0963">Cytoplasm</keyword>
<keyword id="KW-0206">Cytoskeleton</keyword>
<keyword id="KW-1185">Reference proteome</keyword>
<sequence length="359" mass="40459">MSYRRELEKYRDLDEDEILGGLTEEELRTLENELDELDPDNALLPAGLRQKDQTTKAPTGPFRREELLDHLEKQAKEFKDREDLVPYTGEKRGKVWVPKQKPMDPVLESVTLEPELEEALANASDAELCDIAAILGMHTLMSNQQYYQALGSSSIVNKEGLNSVIKPTQYKPVPDEEPNATDVEETLERIKNNDPKLEEVNLNNIRNIPIPTLKAYAEALKENSYVKKFSIVGTRSNDPVAFALAEMLKVNKVLKTLNVESNFISGAGILRLVEALPYNTSLVELKIDNQSQPLGNKVEMEIVSMLEKNATLLKFGYHFTQQGPRLRASNAMMNNNDLVRKRRLADLTGPIIPKCRSGV</sequence>
<protein>
    <recommendedName>
        <fullName>Tropomodulin-1</fullName>
    </recommendedName>
    <alternativeName>
        <fullName>Erythrocyte tropomodulin</fullName>
        <shortName>E-Tmod</shortName>
    </alternativeName>
</protein>
<dbReference type="EMBL" id="BC126605">
    <property type="protein sequence ID" value="AAI26606.1"/>
    <property type="molecule type" value="mRNA"/>
</dbReference>
<dbReference type="RefSeq" id="NP_001073108.1">
    <property type="nucleotide sequence ID" value="NM_001079640.1"/>
</dbReference>
<dbReference type="RefSeq" id="XP_024851757.1">
    <property type="nucleotide sequence ID" value="XM_024995989.2"/>
</dbReference>
<dbReference type="SMR" id="A0JNC0"/>
<dbReference type="FunCoup" id="A0JNC0">
    <property type="interactions" value="898"/>
</dbReference>
<dbReference type="STRING" id="9913.ENSBTAP00000019585"/>
<dbReference type="PaxDb" id="9913-ENSBTAP00000019585"/>
<dbReference type="Ensembl" id="ENSBTAT00000019585.7">
    <property type="protein sequence ID" value="ENSBTAP00000019585.6"/>
    <property type="gene ID" value="ENSBTAG00000014719.7"/>
</dbReference>
<dbReference type="GeneID" id="780784"/>
<dbReference type="KEGG" id="bta:780784"/>
<dbReference type="CTD" id="7111"/>
<dbReference type="VEuPathDB" id="HostDB:ENSBTAG00000014719"/>
<dbReference type="VGNC" id="VGNC:36135">
    <property type="gene designation" value="TMOD1"/>
</dbReference>
<dbReference type="eggNOG" id="KOG3735">
    <property type="taxonomic scope" value="Eukaryota"/>
</dbReference>
<dbReference type="GeneTree" id="ENSGT00940000158695"/>
<dbReference type="HOGENOM" id="CLU_031052_0_0_1"/>
<dbReference type="InParanoid" id="A0JNC0"/>
<dbReference type="OMA" id="PYQRDKL"/>
<dbReference type="OrthoDB" id="2163268at2759"/>
<dbReference type="Reactome" id="R-BTA-390522">
    <property type="pathway name" value="Striated Muscle Contraction"/>
</dbReference>
<dbReference type="Proteomes" id="UP000009136">
    <property type="component" value="Chromosome 8"/>
</dbReference>
<dbReference type="Bgee" id="ENSBTAG00000014719">
    <property type="expression patterns" value="Expressed in oocyte and 104 other cell types or tissues"/>
</dbReference>
<dbReference type="GO" id="GO:0005884">
    <property type="term" value="C:actin filament"/>
    <property type="evidence" value="ECO:0000250"/>
    <property type="project" value="UniProtKB"/>
</dbReference>
<dbReference type="GO" id="GO:0008180">
    <property type="term" value="C:COP9 signalosome"/>
    <property type="evidence" value="ECO:0007669"/>
    <property type="project" value="Ensembl"/>
</dbReference>
<dbReference type="GO" id="GO:0030863">
    <property type="term" value="C:cortical cytoskeleton"/>
    <property type="evidence" value="ECO:0007669"/>
    <property type="project" value="Ensembl"/>
</dbReference>
<dbReference type="GO" id="GO:0005856">
    <property type="term" value="C:cytoskeleton"/>
    <property type="evidence" value="ECO:0000318"/>
    <property type="project" value="GO_Central"/>
</dbReference>
<dbReference type="GO" id="GO:0016020">
    <property type="term" value="C:membrane"/>
    <property type="evidence" value="ECO:0007669"/>
    <property type="project" value="Ensembl"/>
</dbReference>
<dbReference type="GO" id="GO:0030016">
    <property type="term" value="C:myofibril"/>
    <property type="evidence" value="ECO:0000250"/>
    <property type="project" value="UniProtKB"/>
</dbReference>
<dbReference type="GO" id="GO:0030017">
    <property type="term" value="C:sarcomere"/>
    <property type="evidence" value="ECO:0000250"/>
    <property type="project" value="UniProtKB"/>
</dbReference>
<dbReference type="GO" id="GO:0005865">
    <property type="term" value="C:striated muscle thin filament"/>
    <property type="evidence" value="ECO:0000318"/>
    <property type="project" value="GO_Central"/>
</dbReference>
<dbReference type="GO" id="GO:0003779">
    <property type="term" value="F:actin binding"/>
    <property type="evidence" value="ECO:0000250"/>
    <property type="project" value="UniProtKB"/>
</dbReference>
<dbReference type="GO" id="GO:0005523">
    <property type="term" value="F:tropomyosin binding"/>
    <property type="evidence" value="ECO:0000318"/>
    <property type="project" value="GO_Central"/>
</dbReference>
<dbReference type="GO" id="GO:0007015">
    <property type="term" value="P:actin filament organization"/>
    <property type="evidence" value="ECO:0000318"/>
    <property type="project" value="GO_Central"/>
</dbReference>
<dbReference type="GO" id="GO:0008344">
    <property type="term" value="P:adult locomotory behavior"/>
    <property type="evidence" value="ECO:0007669"/>
    <property type="project" value="Ensembl"/>
</dbReference>
<dbReference type="GO" id="GO:0070307">
    <property type="term" value="P:lens fiber cell development"/>
    <property type="evidence" value="ECO:0007669"/>
    <property type="project" value="Ensembl"/>
</dbReference>
<dbReference type="GO" id="GO:0006936">
    <property type="term" value="P:muscle contraction"/>
    <property type="evidence" value="ECO:0000318"/>
    <property type="project" value="GO_Central"/>
</dbReference>
<dbReference type="GO" id="GO:0030239">
    <property type="term" value="P:myofibril assembly"/>
    <property type="evidence" value="ECO:0000318"/>
    <property type="project" value="GO_Central"/>
</dbReference>
<dbReference type="GO" id="GO:0051694">
    <property type="term" value="P:pointed-end actin filament capping"/>
    <property type="evidence" value="ECO:0007669"/>
    <property type="project" value="InterPro"/>
</dbReference>
<dbReference type="FunFam" id="3.80.10.10:FF:000006">
    <property type="entry name" value="Tropomodulin 2"/>
    <property type="match status" value="1"/>
</dbReference>
<dbReference type="Gene3D" id="3.80.10.10">
    <property type="entry name" value="Ribonuclease Inhibitor"/>
    <property type="match status" value="1"/>
</dbReference>
<dbReference type="InterPro" id="IPR032675">
    <property type="entry name" value="LRR_dom_sf"/>
</dbReference>
<dbReference type="InterPro" id="IPR004934">
    <property type="entry name" value="TMOD"/>
</dbReference>
<dbReference type="PANTHER" id="PTHR10901">
    <property type="entry name" value="TROPOMODULIN"/>
    <property type="match status" value="1"/>
</dbReference>
<dbReference type="PANTHER" id="PTHR10901:SF8">
    <property type="entry name" value="TROPOMODULIN-1"/>
    <property type="match status" value="1"/>
</dbReference>
<dbReference type="Pfam" id="PF03250">
    <property type="entry name" value="Tropomodulin"/>
    <property type="match status" value="1"/>
</dbReference>
<dbReference type="SUPFAM" id="SSF52047">
    <property type="entry name" value="RNI-like"/>
    <property type="match status" value="1"/>
</dbReference>
<name>TMOD1_BOVIN</name>
<organism>
    <name type="scientific">Bos taurus</name>
    <name type="common">Bovine</name>
    <dbReference type="NCBI Taxonomy" id="9913"/>
    <lineage>
        <taxon>Eukaryota</taxon>
        <taxon>Metazoa</taxon>
        <taxon>Chordata</taxon>
        <taxon>Craniata</taxon>
        <taxon>Vertebrata</taxon>
        <taxon>Euteleostomi</taxon>
        <taxon>Mammalia</taxon>
        <taxon>Eutheria</taxon>
        <taxon>Laurasiatheria</taxon>
        <taxon>Artiodactyla</taxon>
        <taxon>Ruminantia</taxon>
        <taxon>Pecora</taxon>
        <taxon>Bovidae</taxon>
        <taxon>Bovinae</taxon>
        <taxon>Bos</taxon>
    </lineage>
</organism>
<comment type="function">
    <text evidence="1">Blocks the elongation and depolymerization of the actin filaments at the pointed end. The Tmod/TM complex contributes to the formation of the short actin protofilament, which in turn defines the geometry of the membrane skeleton. May play an important role in regulating the organization of actin filaments by preferentially binding to a specific tropomyosin isoform at its N-terminus (By similarity).</text>
</comment>
<comment type="subunit">
    <text evidence="3">Binds to the N-terminus of tropomyosin and to actin. Interacts with FLII.</text>
</comment>
<comment type="subcellular location">
    <subcellularLocation>
        <location evidence="2">Cytoplasm</location>
        <location evidence="2">Cytoskeleton</location>
    </subcellularLocation>
    <text evidence="2">In myofibrils with sarcomeric structure, localizes to the pointed end of actin thin filaments.</text>
</comment>
<comment type="similarity">
    <text evidence="6">Belongs to the tropomodulin family.</text>
</comment>
<accession>A0JNC0</accession>
<proteinExistence type="evidence at transcript level"/>